<sequence length="334" mass="36893">MSGFYHKHFLKLLDFTPAELNSLLQLAAKLKADKKSGKEEAKLTGKNIALIFEKDSTRTRCSFEVAAYDQGARVTYLGPSGSQIGHKESIKDTARVLGRMYDGIQYRGYGQEIVETLAEYAGVPVWNGLTNEFHPTQLLADLLTMQEHLPGKTFNEMTLVYAGDARNNMGNSMLEAAALTGLDLRLVAPQACWPEAALVTECRALAQQNGGNITLTEDVAKGVEGADFIYTDVWVSMGEAKEKWAERIALLRDYQVNSKMMQLTGNPEVKFLHCLPAFHDDQTTLGKKMAEEFGLHGGMEVTDEVFESAASIVFDQAENRMHTIKAVMVATLSK</sequence>
<feature type="chain" id="PRO_1000065120" description="Ornithine carbamoyltransferase">
    <location>
        <begin position="1"/>
        <end position="334"/>
    </location>
</feature>
<feature type="binding site" evidence="2">
    <location>
        <begin position="56"/>
        <end position="59"/>
    </location>
    <ligand>
        <name>carbamoyl phosphate</name>
        <dbReference type="ChEBI" id="CHEBI:58228"/>
    </ligand>
</feature>
<feature type="binding site" evidence="2">
    <location>
        <position position="83"/>
    </location>
    <ligand>
        <name>carbamoyl phosphate</name>
        <dbReference type="ChEBI" id="CHEBI:58228"/>
    </ligand>
</feature>
<feature type="binding site" evidence="2">
    <location>
        <position position="107"/>
    </location>
    <ligand>
        <name>carbamoyl phosphate</name>
        <dbReference type="ChEBI" id="CHEBI:58228"/>
    </ligand>
</feature>
<feature type="binding site" evidence="2">
    <location>
        <begin position="134"/>
        <end position="137"/>
    </location>
    <ligand>
        <name>carbamoyl phosphate</name>
        <dbReference type="ChEBI" id="CHEBI:58228"/>
    </ligand>
</feature>
<feature type="binding site" evidence="2">
    <location>
        <position position="168"/>
    </location>
    <ligand>
        <name>L-ornithine</name>
        <dbReference type="ChEBI" id="CHEBI:46911"/>
    </ligand>
</feature>
<feature type="binding site" evidence="2">
    <location>
        <position position="232"/>
    </location>
    <ligand>
        <name>L-ornithine</name>
        <dbReference type="ChEBI" id="CHEBI:46911"/>
    </ligand>
</feature>
<feature type="binding site" evidence="2">
    <location>
        <begin position="236"/>
        <end position="237"/>
    </location>
    <ligand>
        <name>L-ornithine</name>
        <dbReference type="ChEBI" id="CHEBI:46911"/>
    </ligand>
</feature>
<feature type="binding site" evidence="2">
    <location>
        <begin position="274"/>
        <end position="275"/>
    </location>
    <ligand>
        <name>carbamoyl phosphate</name>
        <dbReference type="ChEBI" id="CHEBI:58228"/>
    </ligand>
</feature>
<feature type="binding site" evidence="2">
    <location>
        <position position="320"/>
    </location>
    <ligand>
        <name>carbamoyl phosphate</name>
        <dbReference type="ChEBI" id="CHEBI:58228"/>
    </ligand>
</feature>
<proteinExistence type="inferred from homology"/>
<keyword id="KW-0028">Amino-acid biosynthesis</keyword>
<keyword id="KW-0055">Arginine biosynthesis</keyword>
<keyword id="KW-0963">Cytoplasm</keyword>
<keyword id="KW-1185">Reference proteome</keyword>
<keyword id="KW-0808">Transferase</keyword>
<organism>
    <name type="scientific">Shigella sonnei (strain Ss046)</name>
    <dbReference type="NCBI Taxonomy" id="300269"/>
    <lineage>
        <taxon>Bacteria</taxon>
        <taxon>Pseudomonadati</taxon>
        <taxon>Pseudomonadota</taxon>
        <taxon>Gammaproteobacteria</taxon>
        <taxon>Enterobacterales</taxon>
        <taxon>Enterobacteriaceae</taxon>
        <taxon>Shigella</taxon>
    </lineage>
</organism>
<dbReference type="EC" id="2.1.3.3" evidence="2"/>
<dbReference type="EMBL" id="CP000038">
    <property type="protein sequence ID" value="AAZ90914.1"/>
    <property type="molecule type" value="Genomic_DNA"/>
</dbReference>
<dbReference type="SMR" id="Q3YU98"/>
<dbReference type="KEGG" id="ssn:SSON_4436"/>
<dbReference type="HOGENOM" id="CLU_043846_3_1_6"/>
<dbReference type="UniPathway" id="UPA00068">
    <property type="reaction ID" value="UER00112"/>
</dbReference>
<dbReference type="Proteomes" id="UP000002529">
    <property type="component" value="Chromosome"/>
</dbReference>
<dbReference type="GO" id="GO:0005737">
    <property type="term" value="C:cytoplasm"/>
    <property type="evidence" value="ECO:0007669"/>
    <property type="project" value="UniProtKB-SubCell"/>
</dbReference>
<dbReference type="GO" id="GO:0016597">
    <property type="term" value="F:amino acid binding"/>
    <property type="evidence" value="ECO:0007669"/>
    <property type="project" value="InterPro"/>
</dbReference>
<dbReference type="GO" id="GO:0004585">
    <property type="term" value="F:ornithine carbamoyltransferase activity"/>
    <property type="evidence" value="ECO:0007669"/>
    <property type="project" value="UniProtKB-UniRule"/>
</dbReference>
<dbReference type="GO" id="GO:0042450">
    <property type="term" value="P:arginine biosynthetic process via ornithine"/>
    <property type="evidence" value="ECO:0007669"/>
    <property type="project" value="TreeGrafter"/>
</dbReference>
<dbReference type="GO" id="GO:0019240">
    <property type="term" value="P:citrulline biosynthetic process"/>
    <property type="evidence" value="ECO:0007669"/>
    <property type="project" value="TreeGrafter"/>
</dbReference>
<dbReference type="GO" id="GO:0006526">
    <property type="term" value="P:L-arginine biosynthetic process"/>
    <property type="evidence" value="ECO:0007669"/>
    <property type="project" value="UniProtKB-UniRule"/>
</dbReference>
<dbReference type="FunFam" id="3.40.50.1370:FF:000003">
    <property type="entry name" value="Ornithine carbamoyltransferase"/>
    <property type="match status" value="1"/>
</dbReference>
<dbReference type="FunFam" id="3.40.50.1370:FF:000004">
    <property type="entry name" value="Ornithine carbamoyltransferase"/>
    <property type="match status" value="1"/>
</dbReference>
<dbReference type="Gene3D" id="3.40.50.1370">
    <property type="entry name" value="Aspartate/ornithine carbamoyltransferase"/>
    <property type="match status" value="2"/>
</dbReference>
<dbReference type="HAMAP" id="MF_01109">
    <property type="entry name" value="OTCase"/>
    <property type="match status" value="1"/>
</dbReference>
<dbReference type="InterPro" id="IPR006132">
    <property type="entry name" value="Asp/Orn_carbamoyltranf_P-bd"/>
</dbReference>
<dbReference type="InterPro" id="IPR006130">
    <property type="entry name" value="Asp/Orn_carbamoylTrfase"/>
</dbReference>
<dbReference type="InterPro" id="IPR036901">
    <property type="entry name" value="Asp/Orn_carbamoylTrfase_sf"/>
</dbReference>
<dbReference type="InterPro" id="IPR006131">
    <property type="entry name" value="Asp_carbamoyltransf_Asp/Orn-bd"/>
</dbReference>
<dbReference type="InterPro" id="IPR002292">
    <property type="entry name" value="Orn/put_carbamltrans"/>
</dbReference>
<dbReference type="InterPro" id="IPR024904">
    <property type="entry name" value="OTCase_ArgI"/>
</dbReference>
<dbReference type="NCBIfam" id="TIGR00658">
    <property type="entry name" value="orni_carb_tr"/>
    <property type="match status" value="1"/>
</dbReference>
<dbReference type="NCBIfam" id="NF003286">
    <property type="entry name" value="PRK04284.1"/>
    <property type="match status" value="1"/>
</dbReference>
<dbReference type="NCBIfam" id="NF009213">
    <property type="entry name" value="PRK12562.1"/>
    <property type="match status" value="1"/>
</dbReference>
<dbReference type="PANTHER" id="PTHR45753:SF4">
    <property type="entry name" value="ORNITHINE CARBAMOYLTRANSFERASE SUBUNIT F-RELATED"/>
    <property type="match status" value="1"/>
</dbReference>
<dbReference type="PANTHER" id="PTHR45753">
    <property type="entry name" value="ORNITHINE CARBAMOYLTRANSFERASE, MITOCHONDRIAL"/>
    <property type="match status" value="1"/>
</dbReference>
<dbReference type="Pfam" id="PF00185">
    <property type="entry name" value="OTCace"/>
    <property type="match status" value="1"/>
</dbReference>
<dbReference type="Pfam" id="PF02729">
    <property type="entry name" value="OTCace_N"/>
    <property type="match status" value="1"/>
</dbReference>
<dbReference type="PRINTS" id="PR00100">
    <property type="entry name" value="AOTCASE"/>
</dbReference>
<dbReference type="PRINTS" id="PR00102">
    <property type="entry name" value="OTCASE"/>
</dbReference>
<dbReference type="SUPFAM" id="SSF53671">
    <property type="entry name" value="Aspartate/ornithine carbamoyltransferase"/>
    <property type="match status" value="1"/>
</dbReference>
<dbReference type="PROSITE" id="PS00097">
    <property type="entry name" value="CARBAMOYLTRANSFERASE"/>
    <property type="match status" value="1"/>
</dbReference>
<comment type="function">
    <text evidence="1">Reversibly catalyzes the transfer of the carbamoyl group from carbamoyl phosphate (CP) to the N(epsilon) atom of ornithine (ORN) to produce L-citrulline.</text>
</comment>
<comment type="catalytic activity">
    <reaction evidence="2">
        <text>carbamoyl phosphate + L-ornithine = L-citrulline + phosphate + H(+)</text>
        <dbReference type="Rhea" id="RHEA:19513"/>
        <dbReference type="ChEBI" id="CHEBI:15378"/>
        <dbReference type="ChEBI" id="CHEBI:43474"/>
        <dbReference type="ChEBI" id="CHEBI:46911"/>
        <dbReference type="ChEBI" id="CHEBI:57743"/>
        <dbReference type="ChEBI" id="CHEBI:58228"/>
        <dbReference type="EC" id="2.1.3.3"/>
    </reaction>
</comment>
<comment type="pathway">
    <text evidence="2">Amino-acid biosynthesis; L-arginine biosynthesis; L-arginine from L-ornithine and carbamoyl phosphate: step 1/3.</text>
</comment>
<comment type="subcellular location">
    <subcellularLocation>
        <location evidence="2">Cytoplasm</location>
    </subcellularLocation>
</comment>
<comment type="similarity">
    <text evidence="2">Belongs to the aspartate/ornithine carbamoyltransferase superfamily. OTCase family.</text>
</comment>
<name>OTC_SHISS</name>
<reference key="1">
    <citation type="journal article" date="2005" name="Nucleic Acids Res.">
        <title>Genome dynamics and diversity of Shigella species, the etiologic agents of bacillary dysentery.</title>
        <authorList>
            <person name="Yang F."/>
            <person name="Yang J."/>
            <person name="Zhang X."/>
            <person name="Chen L."/>
            <person name="Jiang Y."/>
            <person name="Yan Y."/>
            <person name="Tang X."/>
            <person name="Wang J."/>
            <person name="Xiong Z."/>
            <person name="Dong J."/>
            <person name="Xue Y."/>
            <person name="Zhu Y."/>
            <person name="Xu X."/>
            <person name="Sun L."/>
            <person name="Chen S."/>
            <person name="Nie H."/>
            <person name="Peng J."/>
            <person name="Xu J."/>
            <person name="Wang Y."/>
            <person name="Yuan Z."/>
            <person name="Wen Y."/>
            <person name="Yao Z."/>
            <person name="Shen Y."/>
            <person name="Qiang B."/>
            <person name="Hou Y."/>
            <person name="Yu J."/>
            <person name="Jin Q."/>
        </authorList>
    </citation>
    <scope>NUCLEOTIDE SEQUENCE [LARGE SCALE GENOMIC DNA]</scope>
    <source>
        <strain>Ss046</strain>
    </source>
</reference>
<protein>
    <recommendedName>
        <fullName evidence="2">Ornithine carbamoyltransferase</fullName>
        <shortName evidence="2">OTCase</shortName>
        <ecNumber evidence="2">2.1.3.3</ecNumber>
    </recommendedName>
</protein>
<accession>Q3YU98</accession>
<gene>
    <name evidence="2" type="primary">argI</name>
    <name type="ordered locus">SSON_4436</name>
</gene>
<evidence type="ECO:0000250" key="1"/>
<evidence type="ECO:0000255" key="2">
    <source>
        <dbReference type="HAMAP-Rule" id="MF_01109"/>
    </source>
</evidence>